<keyword id="KW-0025">Alternative splicing</keyword>
<keyword id="KW-0175">Coiled coil</keyword>
<keyword id="KW-1185">Reference proteome</keyword>
<keyword id="KW-0943">RNA-mediated gene silencing</keyword>
<gene>
    <name evidence="4" type="primary">hrde-4</name>
    <name evidence="8" type="ORF">T10B11.7</name>
</gene>
<name>HRDE4_CAEEL</name>
<protein>
    <recommendedName>
        <fullName evidence="5">Protein hrde-4</fullName>
    </recommendedName>
    <alternativeName>
        <fullName evidence="8">Heritable RNAi deficient protein 4</fullName>
    </alternativeName>
</protein>
<reference evidence="7" key="1">
    <citation type="journal article" date="1998" name="Science">
        <title>Genome sequence of the nematode C. elegans: a platform for investigating biology.</title>
        <authorList>
            <consortium name="The C. elegans sequencing consortium"/>
        </authorList>
    </citation>
    <scope>NUCLEOTIDE SEQUENCE [LARGE SCALE GENOMIC DNA]</scope>
    <source>
        <strain evidence="7">Bristol N2</strain>
    </source>
</reference>
<reference evidence="5" key="2">
    <citation type="journal article" date="2017" name="Genetics">
        <title>Identification and characterization of Caenorhabditis elegans RNAi inheritance machinery.</title>
        <authorList>
            <person name="Spracklin G."/>
            <person name="Fields B."/>
            <person name="Wan G."/>
            <person name="Vijayendran D."/>
            <person name="Wallig A."/>
            <person name="Shukla A."/>
            <person name="Kennedy S."/>
        </authorList>
    </citation>
    <scope>FUNCTION</scope>
    <scope>DISRUPTION PHENOTYPE</scope>
</reference>
<comment type="function">
    <text evidence="6">May play a role in transgenerational epigenetic inheritance.</text>
</comment>
<comment type="alternative products">
    <event type="alternative splicing"/>
    <isoform>
        <id>H2KZ49-1</id>
        <name evidence="8">a</name>
        <sequence type="displayed"/>
    </isoform>
    <isoform>
        <id>H2KZ49-2</id>
        <name evidence="9">b</name>
        <sequence type="described" ref="VSP_059070"/>
    </isoform>
</comment>
<comment type="disruption phenotype">
    <text evidence="3">Mortal germline (Mrt) phenotype in which there is a progressive decline in fertility with each generation at 25 degrees Celsius.</text>
</comment>
<evidence type="ECO:0000255" key="1"/>
<evidence type="ECO:0000256" key="2">
    <source>
        <dbReference type="SAM" id="MobiDB-lite"/>
    </source>
</evidence>
<evidence type="ECO:0000269" key="3">
    <source>
    </source>
</evidence>
<evidence type="ECO:0000303" key="4">
    <source>
    </source>
</evidence>
<evidence type="ECO:0000305" key="5"/>
<evidence type="ECO:0000305" key="6">
    <source>
    </source>
</evidence>
<evidence type="ECO:0000312" key="7">
    <source>
        <dbReference type="Proteomes" id="UP000001940"/>
    </source>
</evidence>
<evidence type="ECO:0000312" key="8">
    <source>
        <dbReference type="WormBase" id="T10B11.7a"/>
    </source>
</evidence>
<evidence type="ECO:0000312" key="9">
    <source>
        <dbReference type="WormBase" id="T10B11.7b"/>
    </source>
</evidence>
<proteinExistence type="predicted"/>
<dbReference type="EMBL" id="BX284601">
    <property type="protein sequence ID" value="CCD66246.1"/>
    <property type="molecule type" value="Genomic_DNA"/>
</dbReference>
<dbReference type="EMBL" id="BX284601">
    <property type="protein sequence ID" value="CCD66247.1"/>
    <property type="molecule type" value="Genomic_DNA"/>
</dbReference>
<dbReference type="RefSeq" id="NP_001040682.2">
    <molecule id="H2KZ49-1"/>
    <property type="nucleotide sequence ID" value="NM_001047217.5"/>
</dbReference>
<dbReference type="RefSeq" id="NP_001040683.2">
    <property type="nucleotide sequence ID" value="NM_001047218.2"/>
</dbReference>
<dbReference type="RefSeq" id="NP_001367601.1">
    <molecule id="H2KZ49-2"/>
    <property type="nucleotide sequence ID" value="NM_001380623.1"/>
</dbReference>
<dbReference type="FunCoup" id="H2KZ49">
    <property type="interactions" value="1"/>
</dbReference>
<dbReference type="IntAct" id="H2KZ49">
    <property type="interactions" value="1"/>
</dbReference>
<dbReference type="STRING" id="6239.T10B11.7a.1"/>
<dbReference type="PaxDb" id="6239-T10B11.7a"/>
<dbReference type="EnsemblMetazoa" id="T10B11.7a.1">
    <molecule id="H2KZ49-1"/>
    <property type="protein sequence ID" value="T10B11.7a.1"/>
    <property type="gene ID" value="WBGene00020403"/>
</dbReference>
<dbReference type="EnsemblMetazoa" id="T10B11.7b.1">
    <molecule id="H2KZ49-2"/>
    <property type="protein sequence ID" value="T10B11.7b.1"/>
    <property type="gene ID" value="WBGene00020403"/>
</dbReference>
<dbReference type="GeneID" id="188371"/>
<dbReference type="KEGG" id="cel:CELE_T10B11.7"/>
<dbReference type="AGR" id="WB:WBGene00020403"/>
<dbReference type="CTD" id="188371"/>
<dbReference type="WormBase" id="T10B11.7a">
    <molecule id="H2KZ49-1"/>
    <property type="protein sequence ID" value="CE43751"/>
    <property type="gene ID" value="WBGene00020403"/>
    <property type="gene designation" value="hrde-4"/>
</dbReference>
<dbReference type="WormBase" id="T10B11.7b">
    <molecule id="H2KZ49-2"/>
    <property type="protein sequence ID" value="CE43803"/>
    <property type="gene ID" value="WBGene00020403"/>
    <property type="gene designation" value="hrde-4"/>
</dbReference>
<dbReference type="eggNOG" id="ENOG502TKB0">
    <property type="taxonomic scope" value="Eukaryota"/>
</dbReference>
<dbReference type="HOGENOM" id="CLU_536639_0_0_1"/>
<dbReference type="InParanoid" id="H2KZ49"/>
<dbReference type="OrthoDB" id="10680555at2759"/>
<dbReference type="SignaLink" id="H2KZ49"/>
<dbReference type="PRO" id="PR:H2KZ49"/>
<dbReference type="Proteomes" id="UP000001940">
    <property type="component" value="Chromosome I"/>
</dbReference>
<dbReference type="Bgee" id="WBGene00020403">
    <property type="expression patterns" value="Expressed in embryo and 4 other cell types or tissues"/>
</dbReference>
<dbReference type="GO" id="GO:0031047">
    <property type="term" value="P:regulatory ncRNA-mediated gene silencing"/>
    <property type="evidence" value="ECO:0007669"/>
    <property type="project" value="UniProtKB-KW"/>
</dbReference>
<accession>H2KZ49</accession>
<accession>C6S3L8</accession>
<feature type="chain" id="PRO_0000441623" description="Protein hrde-4" evidence="5">
    <location>
        <begin position="1"/>
        <end position="545"/>
    </location>
</feature>
<feature type="region of interest" description="Disordered" evidence="2">
    <location>
        <begin position="108"/>
        <end position="150"/>
    </location>
</feature>
<feature type="region of interest" description="Disordered" evidence="2">
    <location>
        <begin position="236"/>
        <end position="290"/>
    </location>
</feature>
<feature type="region of interest" description="Disordered" evidence="2">
    <location>
        <begin position="430"/>
        <end position="461"/>
    </location>
</feature>
<feature type="region of interest" description="Disordered" evidence="2">
    <location>
        <begin position="493"/>
        <end position="545"/>
    </location>
</feature>
<feature type="coiled-coil region" evidence="1">
    <location>
        <begin position="325"/>
        <end position="354"/>
    </location>
</feature>
<feature type="compositionally biased region" description="Polar residues" evidence="2">
    <location>
        <begin position="111"/>
        <end position="120"/>
    </location>
</feature>
<feature type="compositionally biased region" description="Basic and acidic residues" evidence="2">
    <location>
        <begin position="124"/>
        <end position="135"/>
    </location>
</feature>
<feature type="compositionally biased region" description="Polar residues" evidence="2">
    <location>
        <begin position="508"/>
        <end position="517"/>
    </location>
</feature>
<feature type="compositionally biased region" description="Acidic residues" evidence="2">
    <location>
        <begin position="530"/>
        <end position="545"/>
    </location>
</feature>
<feature type="splice variant" id="VSP_059070" description="In isoform b." evidence="5">
    <location>
        <begin position="1"/>
        <end position="37"/>
    </location>
</feature>
<sequence length="545" mass="62718">MNTYFRFEWINGEENPCEYNLWRMFQIEPKPKSGANFMKPNLPNTENFSTASSSKIRQLSEQPSCSNSYKKLRHEMGSDNSNIDDPLDDYDDRKKKLAKKKAAFKAKKGYTTGQNKSDNSFEFEVEKSMDRKEPENGDEEESTEDDYRHAYSSVEKSLRKISLLPIQRPSHHTFCVFCSESYPPVEFHFCIFMTAAQKEVNQSVNEFLGKADTINKKMLESLKKFIHTSKVDTIAKHSRMENTSMKKNSDSPKKLKRPSTDPNPISKRFRHISDESTSSSSLAKNKSRSVTPDALPFAMIDSQEHRTQSGRVVKRPNLFCHKEVQIRKETVQKEGLKKKRVNKEKEVEQESTILLGISESERKRNRNMIRRLLANGFELPGDDYVLPPLPADKSTWTREQHKMDIYGPIYCALQSFKPAYTTDMTSEFLEDDGDTEFKSENSESDSDSEDEQKVENDVASSADDIEFIEIVEAERKMDQNLAQQVRSSFVTTAENTENNMLMEDDSSEQGSSKFNRNASRRSTENIEFITIDDDDDDDNDIEIIA</sequence>
<organism evidence="7">
    <name type="scientific">Caenorhabditis elegans</name>
    <dbReference type="NCBI Taxonomy" id="6239"/>
    <lineage>
        <taxon>Eukaryota</taxon>
        <taxon>Metazoa</taxon>
        <taxon>Ecdysozoa</taxon>
        <taxon>Nematoda</taxon>
        <taxon>Chromadorea</taxon>
        <taxon>Rhabditida</taxon>
        <taxon>Rhabditina</taxon>
        <taxon>Rhabditomorpha</taxon>
        <taxon>Rhabditoidea</taxon>
        <taxon>Rhabditidae</taxon>
        <taxon>Peloderinae</taxon>
        <taxon>Caenorhabditis</taxon>
    </lineage>
</organism>